<evidence type="ECO:0000250" key="1"/>
<evidence type="ECO:0000250" key="2">
    <source>
        <dbReference type="UniProtKB" id="P28074"/>
    </source>
</evidence>
<evidence type="ECO:0000255" key="3">
    <source>
        <dbReference type="PROSITE-ProRule" id="PRU00809"/>
    </source>
</evidence>
<dbReference type="EC" id="3.4.25.1" evidence="2"/>
<dbReference type="EMBL" id="AB001935">
    <property type="protein sequence ID" value="BAA19471.1"/>
    <property type="molecule type" value="mRNA"/>
</dbReference>
<dbReference type="EMBL" id="X57210">
    <property type="protein sequence ID" value="CAA40494.1"/>
    <property type="molecule type" value="mRNA"/>
</dbReference>
<dbReference type="PIR" id="S30539">
    <property type="entry name" value="S30539"/>
</dbReference>
<dbReference type="RefSeq" id="NP_001264655.1">
    <property type="nucleotide sequence ID" value="NM_001277726.1"/>
</dbReference>
<dbReference type="SMR" id="P34065"/>
<dbReference type="FunCoup" id="P34065">
    <property type="interactions" value="2342"/>
</dbReference>
<dbReference type="MEROPS" id="T01.012"/>
<dbReference type="GeneID" id="396003"/>
<dbReference type="CTD" id="5693"/>
<dbReference type="VEuPathDB" id="HostDB:geneid_396003"/>
<dbReference type="InParanoid" id="P34065"/>
<dbReference type="OrthoDB" id="37597at2759"/>
<dbReference type="PhylomeDB" id="P34065"/>
<dbReference type="Proteomes" id="UP000000539">
    <property type="component" value="Unassembled WGS sequence"/>
</dbReference>
<dbReference type="GO" id="GO:0005829">
    <property type="term" value="C:cytosol"/>
    <property type="evidence" value="ECO:0000318"/>
    <property type="project" value="GO_Central"/>
</dbReference>
<dbReference type="GO" id="GO:0005634">
    <property type="term" value="C:nucleus"/>
    <property type="evidence" value="ECO:0000318"/>
    <property type="project" value="GO_Central"/>
</dbReference>
<dbReference type="GO" id="GO:0019774">
    <property type="term" value="C:proteasome core complex, beta-subunit complex"/>
    <property type="evidence" value="ECO:0000250"/>
    <property type="project" value="UniProtKB"/>
</dbReference>
<dbReference type="GO" id="GO:0004175">
    <property type="term" value="F:endopeptidase activity"/>
    <property type="evidence" value="ECO:0000318"/>
    <property type="project" value="GO_Central"/>
</dbReference>
<dbReference type="GO" id="GO:0004298">
    <property type="term" value="F:threonine-type endopeptidase activity"/>
    <property type="evidence" value="ECO:0007669"/>
    <property type="project" value="UniProtKB-KW"/>
</dbReference>
<dbReference type="GO" id="GO:0043161">
    <property type="term" value="P:proteasome-mediated ubiquitin-dependent protein catabolic process"/>
    <property type="evidence" value="ECO:0000318"/>
    <property type="project" value="GO_Central"/>
</dbReference>
<dbReference type="CDD" id="cd03761">
    <property type="entry name" value="proteasome_beta_type_5"/>
    <property type="match status" value="1"/>
</dbReference>
<dbReference type="FunFam" id="3.60.20.10:FF:000051">
    <property type="entry name" value="Proteasome subunit beta"/>
    <property type="match status" value="1"/>
</dbReference>
<dbReference type="Gene3D" id="3.60.20.10">
    <property type="entry name" value="Glutamine Phosphoribosylpyrophosphate, subunit 1, domain 1"/>
    <property type="match status" value="1"/>
</dbReference>
<dbReference type="InterPro" id="IPR029055">
    <property type="entry name" value="Ntn_hydrolases_N"/>
</dbReference>
<dbReference type="InterPro" id="IPR000243">
    <property type="entry name" value="Pept_T1A_subB"/>
</dbReference>
<dbReference type="InterPro" id="IPR016050">
    <property type="entry name" value="Proteasome_bsu_CS"/>
</dbReference>
<dbReference type="InterPro" id="IPR001353">
    <property type="entry name" value="Proteasome_sua/b"/>
</dbReference>
<dbReference type="InterPro" id="IPR023333">
    <property type="entry name" value="Proteasome_suB-type"/>
</dbReference>
<dbReference type="PANTHER" id="PTHR32194">
    <property type="entry name" value="METALLOPROTEASE TLDD"/>
    <property type="match status" value="1"/>
</dbReference>
<dbReference type="PANTHER" id="PTHR32194:SF11">
    <property type="entry name" value="PROTEASOME SUBUNIT BETA"/>
    <property type="match status" value="1"/>
</dbReference>
<dbReference type="Pfam" id="PF00227">
    <property type="entry name" value="Proteasome"/>
    <property type="match status" value="1"/>
</dbReference>
<dbReference type="PRINTS" id="PR00141">
    <property type="entry name" value="PROTEASOME"/>
</dbReference>
<dbReference type="SUPFAM" id="SSF56235">
    <property type="entry name" value="N-terminal nucleophile aminohydrolases (Ntn hydrolases)"/>
    <property type="match status" value="1"/>
</dbReference>
<dbReference type="PROSITE" id="PS00854">
    <property type="entry name" value="PROTEASOME_BETA_1"/>
    <property type="match status" value="1"/>
</dbReference>
<dbReference type="PROSITE" id="PS51476">
    <property type="entry name" value="PROTEASOME_BETA_2"/>
    <property type="match status" value="1"/>
</dbReference>
<sequence length="256" mass="27045">CNMALADIVRLPPASEAPFAPLGAPRDLSGPPSKLAVRPWGGADLPGPGLQLLHGTTTLAFKFAHGVVVAVDSRATAGSYIASQTVQKVIEINPSLLGTMAGGAADCSFWERLLARQCRVYELRNKEPISVAAASKLLANMVYQYKGMGLSMGTMICGWDKRGPGLYYVDSEGTRIPGEAFAVGSGSSYAYGVLDGGRRPDMATDEALELARRAIFQAARRDAYSGGSVTVYHVGPRGWRRVSSHDVAGLHDGYGG</sequence>
<gene>
    <name type="primary">PSMB5</name>
</gene>
<protein>
    <recommendedName>
        <fullName>Proteasome subunit beta type-5</fullName>
        <ecNumber evidence="2">3.4.25.1</ecNumber>
    </recommendedName>
    <alternativeName>
        <fullName>Macropain chain 1</fullName>
    </alternativeName>
    <alternativeName>
        <fullName>Multicatalytic endopeptidase complex chain 1</fullName>
    </alternativeName>
    <alternativeName>
        <fullName>Proteasome chain 1</fullName>
    </alternativeName>
    <alternativeName>
        <fullName>Proteasome subunit C1</fullName>
    </alternativeName>
</protein>
<feature type="propeptide" id="PRO_0000026603" description="Removed in mature form" evidence="1">
    <location>
        <begin position="1" status="less than"/>
        <end position="55"/>
    </location>
</feature>
<feature type="chain" id="PRO_0000026604" description="Proteasome subunit beta type-5">
    <location>
        <begin position="56"/>
        <end position="256"/>
    </location>
</feature>
<feature type="active site" description="Nucleophile" evidence="2">
    <location>
        <position position="56"/>
    </location>
</feature>
<feature type="non-terminal residue">
    <location>
        <position position="1"/>
    </location>
</feature>
<reference key="1">
    <citation type="submission" date="1997-03" db="EMBL/GenBank/DDBJ databases">
        <title>Expression of proteasome C1 gene in intercostal muscle of chick embryo.</title>
        <authorList>
            <person name="Hirosaki Y."/>
            <person name="Sawada K."/>
            <person name="Aoyama H."/>
        </authorList>
    </citation>
    <scope>NUCLEOTIDE SEQUENCE [MRNA]</scope>
</reference>
<reference key="2">
    <citation type="submission" date="1990-12" db="EMBL/GenBank/DDBJ databases">
        <title>Primary structure of the smallest subunit of chicken liver proteasome responsible for its chymotrypsin-like activity.</title>
        <authorList>
            <person name="Shiratsuch A."/>
            <person name="Sato S."/>
        </authorList>
    </citation>
    <scope>NUCLEOTIDE SEQUENCE [MRNA] OF 53-256</scope>
    <source>
        <tissue>Liver</tissue>
    </source>
</reference>
<organism>
    <name type="scientific">Gallus gallus</name>
    <name type="common">Chicken</name>
    <dbReference type="NCBI Taxonomy" id="9031"/>
    <lineage>
        <taxon>Eukaryota</taxon>
        <taxon>Metazoa</taxon>
        <taxon>Chordata</taxon>
        <taxon>Craniata</taxon>
        <taxon>Vertebrata</taxon>
        <taxon>Euteleostomi</taxon>
        <taxon>Archelosauria</taxon>
        <taxon>Archosauria</taxon>
        <taxon>Dinosauria</taxon>
        <taxon>Saurischia</taxon>
        <taxon>Theropoda</taxon>
        <taxon>Coelurosauria</taxon>
        <taxon>Aves</taxon>
        <taxon>Neognathae</taxon>
        <taxon>Galloanserae</taxon>
        <taxon>Galliformes</taxon>
        <taxon>Phasianidae</taxon>
        <taxon>Phasianinae</taxon>
        <taxon>Gallus</taxon>
    </lineage>
</organism>
<proteinExistence type="evidence at transcript level"/>
<name>PSB5_CHICK</name>
<accession>P34065</accession>
<comment type="function">
    <text evidence="2">Component of the 20S core proteasome complex involved in the proteolytic degradation of most intracellular proteins. This complex plays numerous essential roles within the cell by associating with different regulatory particles. Associated with two 19S regulatory particles, forms the 26S proteasome and thus participates in the ATP-dependent degradation of ubiquitinated proteins. The 26S proteasome plays a key role in the maintenance of protein homeostasis by removing misfolded or damaged proteins that could impair cellular functions, and by removing proteins whose functions are no longer required. Associated with the PA200 or PA28, the 20S proteasome mediates ubiquitin-independent protein degradation. This type of proteolysis is required in several pathways including spermatogenesis (20S-PA200 complex) or generation of a subset of MHC class I-presented antigenic peptides (20S-PA28 complex). Within the 20S core complex, PSMB5 displays a chymotrypsin-like activity.</text>
</comment>
<comment type="catalytic activity">
    <reaction evidence="2">
        <text>Cleavage of peptide bonds with very broad specificity.</text>
        <dbReference type="EC" id="3.4.25.1"/>
    </reaction>
</comment>
<comment type="subunit">
    <text evidence="2">The 26S proteasome consists of a 20S proteasome core and two 19S regulatory subunits. The 20S proteasome core is a barrel-shaped complex made of 28 subunits that are arranged in four stacked rings. The two outer rings are each formed by seven alpha subunits, and the two inner rings are formed by seven beta subunits. The proteolytic activity is exerted by three beta-subunits PSMB5, PSMB6 and PSMB7. Directly interacts with POMP. Interacts with ABCB1 and TAP1.</text>
</comment>
<comment type="subcellular location">
    <subcellularLocation>
        <location evidence="2">Cytoplasm</location>
    </subcellularLocation>
    <subcellularLocation>
        <location evidence="2">Nucleus</location>
    </subcellularLocation>
</comment>
<comment type="similarity">
    <text evidence="3">Belongs to the peptidase T1B family.</text>
</comment>
<keyword id="KW-0963">Cytoplasm</keyword>
<keyword id="KW-0378">Hydrolase</keyword>
<keyword id="KW-0539">Nucleus</keyword>
<keyword id="KW-0645">Protease</keyword>
<keyword id="KW-0647">Proteasome</keyword>
<keyword id="KW-1185">Reference proteome</keyword>
<keyword id="KW-0888">Threonine protease</keyword>
<keyword id="KW-0865">Zymogen</keyword>